<sequence length="186" mass="20940">MEKYLIVGLGNPGSNYAKTRHNVGFMVINEICNKLNLSLDSSKFNGIFTKTIYNNSIVFFCQPTTYMNLSGEFVIKMLNFYNIPIKNLIVIYDDVDTKLGTIKLRKKGSSGGQNGIKNIINILKTDEIKRIRIGIDKDPHIKLDQYVLSNFKIDELVIIKPAIIKGALATLAAIGEDFDKVMNKFN</sequence>
<name>PTH_UREPA</name>
<comment type="function">
    <text evidence="1">Hydrolyzes ribosome-free peptidyl-tRNAs (with 1 or more amino acids incorporated), which drop off the ribosome during protein synthesis, or as a result of ribosome stalling.</text>
</comment>
<comment type="function">
    <text evidence="1">Catalyzes the release of premature peptidyl moieties from peptidyl-tRNA molecules trapped in stalled 50S ribosomal subunits, and thus maintains levels of free tRNAs and 50S ribosomes.</text>
</comment>
<comment type="catalytic activity">
    <reaction evidence="1">
        <text>an N-acyl-L-alpha-aminoacyl-tRNA + H2O = an N-acyl-L-amino acid + a tRNA + H(+)</text>
        <dbReference type="Rhea" id="RHEA:54448"/>
        <dbReference type="Rhea" id="RHEA-COMP:10123"/>
        <dbReference type="Rhea" id="RHEA-COMP:13883"/>
        <dbReference type="ChEBI" id="CHEBI:15377"/>
        <dbReference type="ChEBI" id="CHEBI:15378"/>
        <dbReference type="ChEBI" id="CHEBI:59874"/>
        <dbReference type="ChEBI" id="CHEBI:78442"/>
        <dbReference type="ChEBI" id="CHEBI:138191"/>
        <dbReference type="EC" id="3.1.1.29"/>
    </reaction>
</comment>
<comment type="subunit">
    <text evidence="1">Monomer.</text>
</comment>
<comment type="subcellular location">
    <subcellularLocation>
        <location evidence="1">Cytoplasm</location>
    </subcellularLocation>
</comment>
<comment type="similarity">
    <text evidence="1">Belongs to the PTH family.</text>
</comment>
<accession>Q9PR67</accession>
<reference key="1">
    <citation type="journal article" date="2000" name="Nature">
        <title>The complete sequence of the mucosal pathogen Ureaplasma urealyticum.</title>
        <authorList>
            <person name="Glass J.I."/>
            <person name="Lefkowitz E.J."/>
            <person name="Glass J.S."/>
            <person name="Heiner C.R."/>
            <person name="Chen E.Y."/>
            <person name="Cassell G.H."/>
        </authorList>
    </citation>
    <scope>NUCLEOTIDE SEQUENCE [LARGE SCALE GENOMIC DNA]</scope>
    <source>
        <strain>ATCC 700970</strain>
    </source>
</reference>
<feature type="chain" id="PRO_0000187849" description="Peptidyl-tRNA hydrolase">
    <location>
        <begin position="1"/>
        <end position="186"/>
    </location>
</feature>
<feature type="active site" description="Proton acceptor" evidence="1">
    <location>
        <position position="21"/>
    </location>
</feature>
<feature type="binding site" evidence="1">
    <location>
        <position position="16"/>
    </location>
    <ligand>
        <name>tRNA</name>
        <dbReference type="ChEBI" id="CHEBI:17843"/>
    </ligand>
</feature>
<feature type="binding site" evidence="1">
    <location>
        <position position="66"/>
    </location>
    <ligand>
        <name>tRNA</name>
        <dbReference type="ChEBI" id="CHEBI:17843"/>
    </ligand>
</feature>
<feature type="binding site" evidence="1">
    <location>
        <position position="68"/>
    </location>
    <ligand>
        <name>tRNA</name>
        <dbReference type="ChEBI" id="CHEBI:17843"/>
    </ligand>
</feature>
<feature type="binding site" evidence="1">
    <location>
        <position position="114"/>
    </location>
    <ligand>
        <name>tRNA</name>
        <dbReference type="ChEBI" id="CHEBI:17843"/>
    </ligand>
</feature>
<feature type="site" description="Discriminates between blocked and unblocked aminoacyl-tRNA" evidence="1">
    <location>
        <position position="11"/>
    </location>
</feature>
<feature type="site" description="Stabilizes the basic form of H active site to accept a proton" evidence="1">
    <location>
        <position position="93"/>
    </location>
</feature>
<keyword id="KW-0963">Cytoplasm</keyword>
<keyword id="KW-0378">Hydrolase</keyword>
<keyword id="KW-1185">Reference proteome</keyword>
<keyword id="KW-0694">RNA-binding</keyword>
<keyword id="KW-0820">tRNA-binding</keyword>
<evidence type="ECO:0000255" key="1">
    <source>
        <dbReference type="HAMAP-Rule" id="MF_00083"/>
    </source>
</evidence>
<dbReference type="EC" id="3.1.1.29" evidence="1"/>
<dbReference type="EMBL" id="AF222894">
    <property type="protein sequence ID" value="AAF30483.1"/>
    <property type="molecule type" value="Genomic_DNA"/>
</dbReference>
<dbReference type="RefSeq" id="WP_006688439.1">
    <property type="nucleotide sequence ID" value="NC_002162.1"/>
</dbReference>
<dbReference type="SMR" id="Q9PR67"/>
<dbReference type="STRING" id="273119.UU078"/>
<dbReference type="EnsemblBacteria" id="AAF30483">
    <property type="protein sequence ID" value="AAF30483"/>
    <property type="gene ID" value="UU078"/>
</dbReference>
<dbReference type="GeneID" id="29672163"/>
<dbReference type="KEGG" id="uur:UU078"/>
<dbReference type="eggNOG" id="COG0193">
    <property type="taxonomic scope" value="Bacteria"/>
</dbReference>
<dbReference type="HOGENOM" id="CLU_062456_4_1_14"/>
<dbReference type="OrthoDB" id="9800507at2"/>
<dbReference type="Proteomes" id="UP000000423">
    <property type="component" value="Chromosome"/>
</dbReference>
<dbReference type="GO" id="GO:0005737">
    <property type="term" value="C:cytoplasm"/>
    <property type="evidence" value="ECO:0007669"/>
    <property type="project" value="UniProtKB-SubCell"/>
</dbReference>
<dbReference type="GO" id="GO:0004045">
    <property type="term" value="F:peptidyl-tRNA hydrolase activity"/>
    <property type="evidence" value="ECO:0007669"/>
    <property type="project" value="UniProtKB-UniRule"/>
</dbReference>
<dbReference type="GO" id="GO:0000049">
    <property type="term" value="F:tRNA binding"/>
    <property type="evidence" value="ECO:0007669"/>
    <property type="project" value="UniProtKB-UniRule"/>
</dbReference>
<dbReference type="GO" id="GO:0006515">
    <property type="term" value="P:protein quality control for misfolded or incompletely synthesized proteins"/>
    <property type="evidence" value="ECO:0007669"/>
    <property type="project" value="UniProtKB-UniRule"/>
</dbReference>
<dbReference type="GO" id="GO:0072344">
    <property type="term" value="P:rescue of stalled ribosome"/>
    <property type="evidence" value="ECO:0007669"/>
    <property type="project" value="UniProtKB-UniRule"/>
</dbReference>
<dbReference type="CDD" id="cd00462">
    <property type="entry name" value="PTH"/>
    <property type="match status" value="1"/>
</dbReference>
<dbReference type="FunFam" id="3.40.50.1470:FF:000001">
    <property type="entry name" value="Peptidyl-tRNA hydrolase"/>
    <property type="match status" value="1"/>
</dbReference>
<dbReference type="Gene3D" id="3.40.50.1470">
    <property type="entry name" value="Peptidyl-tRNA hydrolase"/>
    <property type="match status" value="1"/>
</dbReference>
<dbReference type="HAMAP" id="MF_00083">
    <property type="entry name" value="Pept_tRNA_hydro_bact"/>
    <property type="match status" value="1"/>
</dbReference>
<dbReference type="InterPro" id="IPR001328">
    <property type="entry name" value="Pept_tRNA_hydro"/>
</dbReference>
<dbReference type="InterPro" id="IPR018171">
    <property type="entry name" value="Pept_tRNA_hydro_CS"/>
</dbReference>
<dbReference type="InterPro" id="IPR036416">
    <property type="entry name" value="Pept_tRNA_hydro_sf"/>
</dbReference>
<dbReference type="NCBIfam" id="TIGR00447">
    <property type="entry name" value="pth"/>
    <property type="match status" value="1"/>
</dbReference>
<dbReference type="PANTHER" id="PTHR17224">
    <property type="entry name" value="PEPTIDYL-TRNA HYDROLASE"/>
    <property type="match status" value="1"/>
</dbReference>
<dbReference type="PANTHER" id="PTHR17224:SF1">
    <property type="entry name" value="PEPTIDYL-TRNA HYDROLASE"/>
    <property type="match status" value="1"/>
</dbReference>
<dbReference type="Pfam" id="PF01195">
    <property type="entry name" value="Pept_tRNA_hydro"/>
    <property type="match status" value="1"/>
</dbReference>
<dbReference type="SUPFAM" id="SSF53178">
    <property type="entry name" value="Peptidyl-tRNA hydrolase-like"/>
    <property type="match status" value="1"/>
</dbReference>
<dbReference type="PROSITE" id="PS01195">
    <property type="entry name" value="PEPT_TRNA_HYDROL_1"/>
    <property type="match status" value="1"/>
</dbReference>
<organism>
    <name type="scientific">Ureaplasma parvum serovar 3 (strain ATCC 700970)</name>
    <dbReference type="NCBI Taxonomy" id="273119"/>
    <lineage>
        <taxon>Bacteria</taxon>
        <taxon>Bacillati</taxon>
        <taxon>Mycoplasmatota</taxon>
        <taxon>Mycoplasmoidales</taxon>
        <taxon>Mycoplasmoidaceae</taxon>
        <taxon>Ureaplasma</taxon>
    </lineage>
</organism>
<proteinExistence type="inferred from homology"/>
<protein>
    <recommendedName>
        <fullName evidence="1">Peptidyl-tRNA hydrolase</fullName>
        <shortName evidence="1">Pth</shortName>
        <ecNumber evidence="1">3.1.1.29</ecNumber>
    </recommendedName>
</protein>
<gene>
    <name evidence="1" type="primary">pth</name>
    <name type="ordered locus">UU078</name>
</gene>